<organism>
    <name type="scientific">Pisum sativum</name>
    <name type="common">Garden pea</name>
    <name type="synonym">Lathyrus oleraceus</name>
    <dbReference type="NCBI Taxonomy" id="3888"/>
    <lineage>
        <taxon>Eukaryota</taxon>
        <taxon>Viridiplantae</taxon>
        <taxon>Streptophyta</taxon>
        <taxon>Embryophyta</taxon>
        <taxon>Tracheophyta</taxon>
        <taxon>Spermatophyta</taxon>
        <taxon>Magnoliopsida</taxon>
        <taxon>eudicotyledons</taxon>
        <taxon>Gunneridae</taxon>
        <taxon>Pentapetalae</taxon>
        <taxon>rosids</taxon>
        <taxon>fabids</taxon>
        <taxon>Fabales</taxon>
        <taxon>Fabaceae</taxon>
        <taxon>Papilionoideae</taxon>
        <taxon>50 kb inversion clade</taxon>
        <taxon>NPAAA clade</taxon>
        <taxon>Hologalegina</taxon>
        <taxon>IRL clade</taxon>
        <taxon>Fabeae</taxon>
        <taxon>Pisum</taxon>
    </lineage>
</organism>
<accession>Q06931</accession>
<feature type="chain" id="PRO_0000154168" description="ABA-responsive protein ABR17">
    <location>
        <begin position="1"/>
        <end position="157"/>
    </location>
</feature>
<keyword id="KW-0568">Pathogenesis-related protein</keyword>
<keyword id="KW-0611">Plant defense</keyword>
<sequence>MGVFVFDDEYVSTVAPPKLYKALAKDADEIVPKVIKEAQGVEIIEGNGGPGTIKKLSILEDGKTNYVLHKLDAVDEANFGYNYSLVGGPGLHESLEKVAFETIILAGSDGGSIVKISVKYHTKGDAALSDAVRDETKAKGTGLIKAIEGYVLANPGY</sequence>
<dbReference type="EMBL" id="Z15128">
    <property type="protein sequence ID" value="CAA78829.1"/>
    <property type="molecule type" value="mRNA"/>
</dbReference>
<dbReference type="PIR" id="S42649">
    <property type="entry name" value="S42649"/>
</dbReference>
<dbReference type="RefSeq" id="NP_001413756.1">
    <property type="nucleotide sequence ID" value="NM_001426827.1"/>
</dbReference>
<dbReference type="SMR" id="Q06931"/>
<dbReference type="EnsemblPlants" id="Psat1g156920.1">
    <property type="protein sequence ID" value="Psat1g156920.1.cds"/>
    <property type="gene ID" value="Psat1g156920"/>
</dbReference>
<dbReference type="GeneID" id="127073574"/>
<dbReference type="Gramene" id="Psat1g156920.1">
    <property type="protein sequence ID" value="Psat1g156920.1.cds"/>
    <property type="gene ID" value="Psat1g156920"/>
</dbReference>
<dbReference type="OrthoDB" id="1858506at2759"/>
<dbReference type="GO" id="GO:0005737">
    <property type="term" value="C:cytoplasm"/>
    <property type="evidence" value="ECO:0007669"/>
    <property type="project" value="TreeGrafter"/>
</dbReference>
<dbReference type="GO" id="GO:0005634">
    <property type="term" value="C:nucleus"/>
    <property type="evidence" value="ECO:0007669"/>
    <property type="project" value="TreeGrafter"/>
</dbReference>
<dbReference type="GO" id="GO:0010427">
    <property type="term" value="F:abscisic acid binding"/>
    <property type="evidence" value="ECO:0007669"/>
    <property type="project" value="InterPro"/>
</dbReference>
<dbReference type="GO" id="GO:0004864">
    <property type="term" value="F:protein phosphatase inhibitor activity"/>
    <property type="evidence" value="ECO:0007669"/>
    <property type="project" value="InterPro"/>
</dbReference>
<dbReference type="GO" id="GO:0038023">
    <property type="term" value="F:signaling receptor activity"/>
    <property type="evidence" value="ECO:0007669"/>
    <property type="project" value="InterPro"/>
</dbReference>
<dbReference type="GO" id="GO:0009738">
    <property type="term" value="P:abscisic acid-activated signaling pathway"/>
    <property type="evidence" value="ECO:0007669"/>
    <property type="project" value="InterPro"/>
</dbReference>
<dbReference type="GO" id="GO:0006952">
    <property type="term" value="P:defense response"/>
    <property type="evidence" value="ECO:0007669"/>
    <property type="project" value="UniProtKB-KW"/>
</dbReference>
<dbReference type="CDD" id="cd07816">
    <property type="entry name" value="Bet_v1-like"/>
    <property type="match status" value="1"/>
</dbReference>
<dbReference type="FunFam" id="3.30.530.20:FF:000007">
    <property type="entry name" value="Major pollen allergen Bet v 1-A"/>
    <property type="match status" value="1"/>
</dbReference>
<dbReference type="Gene3D" id="3.30.530.20">
    <property type="match status" value="1"/>
</dbReference>
<dbReference type="InterPro" id="IPR000916">
    <property type="entry name" value="Bet_v_I/MLP"/>
</dbReference>
<dbReference type="InterPro" id="IPR024949">
    <property type="entry name" value="Bet_v_I_allergen"/>
</dbReference>
<dbReference type="InterPro" id="IPR050279">
    <property type="entry name" value="Plant_def-hormone_signal"/>
</dbReference>
<dbReference type="InterPro" id="IPR023393">
    <property type="entry name" value="START-like_dom_sf"/>
</dbReference>
<dbReference type="PANTHER" id="PTHR31213:SF88">
    <property type="entry name" value="ABA-RESPONSIVE PROTEIN"/>
    <property type="match status" value="1"/>
</dbReference>
<dbReference type="PANTHER" id="PTHR31213">
    <property type="entry name" value="OS08G0374000 PROTEIN-RELATED"/>
    <property type="match status" value="1"/>
</dbReference>
<dbReference type="Pfam" id="PF00407">
    <property type="entry name" value="Bet_v_1"/>
    <property type="match status" value="1"/>
</dbReference>
<dbReference type="PRINTS" id="PR00634">
    <property type="entry name" value="BETALLERGEN"/>
</dbReference>
<dbReference type="SUPFAM" id="SSF55961">
    <property type="entry name" value="Bet v1-like"/>
    <property type="match status" value="1"/>
</dbReference>
<dbReference type="PROSITE" id="PS00451">
    <property type="entry name" value="PATHOGENESIS_BETVI"/>
    <property type="match status" value="1"/>
</dbReference>
<evidence type="ECO:0000305" key="1"/>
<protein>
    <recommendedName>
        <fullName>ABA-responsive protein ABR17</fullName>
    </recommendedName>
</protein>
<proteinExistence type="evidence at transcript level"/>
<comment type="induction">
    <text>By abscisic acid (ABA).</text>
</comment>
<comment type="similarity">
    <text evidence="1">Belongs to the BetVI family.</text>
</comment>
<reference key="1">
    <citation type="journal article" date="1994" name="Plant Mol. Biol.">
        <title>Two ABA-responsive proteins from pea (Pisum sativum L.) are closely related to intracellular pathogenesis-related proteins.</title>
        <authorList>
            <person name="Iturriaga E.A."/>
            <person name="Leech M.J."/>
            <person name="Barratt D.H."/>
            <person name="Wang T.L."/>
        </authorList>
    </citation>
    <scope>NUCLEOTIDE SEQUENCE [MRNA]</scope>
    <source>
        <tissue>Cotyledon</tissue>
    </source>
</reference>
<name>ABR17_PEA</name>